<gene>
    <name type="primary">PGK1</name>
    <name type="ordered locus">AEL038C</name>
</gene>
<comment type="function">
    <text evidence="2 3 4">Catalyzes one of the two ATP producing reactions in the glycolytic pathway via the reversible conversion of 1,3-diphosphoglycerate to 3-phosphoglycerate (By similarity). Both L- and D- forms of purine and pyrimidine nucleotides can be used as substrates, but the activity is much lower on pyrimidines (By similarity). Negatively regulates the biosynthesis of acetyl-CoA from pyruvate in the mitochondrion (By similarity).</text>
</comment>
<comment type="catalytic activity">
    <reaction evidence="4">
        <text>(2R)-3-phosphoglycerate + ATP = (2R)-3-phospho-glyceroyl phosphate + ADP</text>
        <dbReference type="Rhea" id="RHEA:14801"/>
        <dbReference type="ChEBI" id="CHEBI:30616"/>
        <dbReference type="ChEBI" id="CHEBI:57604"/>
        <dbReference type="ChEBI" id="CHEBI:58272"/>
        <dbReference type="ChEBI" id="CHEBI:456216"/>
        <dbReference type="EC" id="2.7.2.3"/>
    </reaction>
</comment>
<comment type="cofactor">
    <cofactor evidence="3">
        <name>Mg(2+)</name>
        <dbReference type="ChEBI" id="CHEBI:18420"/>
    </cofactor>
</comment>
<comment type="pathway">
    <text evidence="4">Carbohydrate degradation; glycolysis; pyruvate from D-glyceraldehyde 3-phosphate: step 2/5.</text>
</comment>
<comment type="subunit">
    <text evidence="1">Monomer.</text>
</comment>
<comment type="subcellular location">
    <subcellularLocation>
        <location evidence="4">Cytoplasm</location>
    </subcellularLocation>
    <subcellularLocation>
        <location evidence="4">Mitochondrion</location>
    </subcellularLocation>
</comment>
<comment type="similarity">
    <text evidence="6">Belongs to the phosphoglycerate kinase family.</text>
</comment>
<comment type="sequence caution" evidence="6">
    <conflict type="erroneous initiation">
        <sequence resource="EMBL-CDS" id="AAS52647"/>
    </conflict>
    <text>Extended N-terminus.</text>
</comment>
<dbReference type="EC" id="2.7.2.3" evidence="4"/>
<dbReference type="EMBL" id="AE016818">
    <property type="protein sequence ID" value="AAS52647.2"/>
    <property type="status" value="ALT_INIT"/>
    <property type="molecule type" value="Genomic_DNA"/>
</dbReference>
<dbReference type="RefSeq" id="NP_984823.2">
    <property type="nucleotide sequence ID" value="NM_210177.2"/>
</dbReference>
<dbReference type="SMR" id="Q757Q0"/>
<dbReference type="FunCoup" id="Q757Q0">
    <property type="interactions" value="812"/>
</dbReference>
<dbReference type="STRING" id="284811.Q757Q0"/>
<dbReference type="GeneID" id="4621019"/>
<dbReference type="KEGG" id="ago:AGOS_AEL038C"/>
<dbReference type="eggNOG" id="KOG1367">
    <property type="taxonomic scope" value="Eukaryota"/>
</dbReference>
<dbReference type="InParanoid" id="Q757Q0"/>
<dbReference type="OrthoDB" id="275353at2759"/>
<dbReference type="UniPathway" id="UPA00109">
    <property type="reaction ID" value="UER00185"/>
</dbReference>
<dbReference type="Proteomes" id="UP000000591">
    <property type="component" value="Chromosome V"/>
</dbReference>
<dbReference type="GO" id="GO:0005829">
    <property type="term" value="C:cytosol"/>
    <property type="evidence" value="ECO:0000318"/>
    <property type="project" value="GO_Central"/>
</dbReference>
<dbReference type="GO" id="GO:0005739">
    <property type="term" value="C:mitochondrion"/>
    <property type="evidence" value="ECO:0007669"/>
    <property type="project" value="UniProtKB-SubCell"/>
</dbReference>
<dbReference type="GO" id="GO:0043531">
    <property type="term" value="F:ADP binding"/>
    <property type="evidence" value="ECO:0000318"/>
    <property type="project" value="GO_Central"/>
</dbReference>
<dbReference type="GO" id="GO:0005524">
    <property type="term" value="F:ATP binding"/>
    <property type="evidence" value="ECO:0000318"/>
    <property type="project" value="GO_Central"/>
</dbReference>
<dbReference type="GO" id="GO:0046872">
    <property type="term" value="F:metal ion binding"/>
    <property type="evidence" value="ECO:0007669"/>
    <property type="project" value="UniProtKB-KW"/>
</dbReference>
<dbReference type="GO" id="GO:0004618">
    <property type="term" value="F:phosphoglycerate kinase activity"/>
    <property type="evidence" value="ECO:0000318"/>
    <property type="project" value="GO_Central"/>
</dbReference>
<dbReference type="GO" id="GO:0006094">
    <property type="term" value="P:gluconeogenesis"/>
    <property type="evidence" value="ECO:0000318"/>
    <property type="project" value="GO_Central"/>
</dbReference>
<dbReference type="GO" id="GO:0006096">
    <property type="term" value="P:glycolytic process"/>
    <property type="evidence" value="ECO:0000318"/>
    <property type="project" value="GO_Central"/>
</dbReference>
<dbReference type="CDD" id="cd00318">
    <property type="entry name" value="Phosphoglycerate_kinase"/>
    <property type="match status" value="1"/>
</dbReference>
<dbReference type="FunFam" id="3.40.50.1260:FF:000003">
    <property type="entry name" value="Phosphoglycerate kinase"/>
    <property type="match status" value="1"/>
</dbReference>
<dbReference type="FunFam" id="3.40.50.1260:FF:000019">
    <property type="entry name" value="Phosphoglycerate kinase 1"/>
    <property type="match status" value="1"/>
</dbReference>
<dbReference type="Gene3D" id="3.40.50.1260">
    <property type="entry name" value="Phosphoglycerate kinase, N-terminal domain"/>
    <property type="match status" value="3"/>
</dbReference>
<dbReference type="HAMAP" id="MF_00145">
    <property type="entry name" value="Phosphoglyc_kinase"/>
    <property type="match status" value="1"/>
</dbReference>
<dbReference type="InterPro" id="IPR001576">
    <property type="entry name" value="Phosphoglycerate_kinase"/>
</dbReference>
<dbReference type="InterPro" id="IPR015911">
    <property type="entry name" value="Phosphoglycerate_kinase_CS"/>
</dbReference>
<dbReference type="InterPro" id="IPR015824">
    <property type="entry name" value="Phosphoglycerate_kinase_N"/>
</dbReference>
<dbReference type="InterPro" id="IPR036043">
    <property type="entry name" value="Phosphoglycerate_kinase_sf"/>
</dbReference>
<dbReference type="PANTHER" id="PTHR11406">
    <property type="entry name" value="PHOSPHOGLYCERATE KINASE"/>
    <property type="match status" value="1"/>
</dbReference>
<dbReference type="PANTHER" id="PTHR11406:SF0">
    <property type="entry name" value="PHOSPHOGLYCERATE KINASE"/>
    <property type="match status" value="1"/>
</dbReference>
<dbReference type="Pfam" id="PF00162">
    <property type="entry name" value="PGK"/>
    <property type="match status" value="1"/>
</dbReference>
<dbReference type="PIRSF" id="PIRSF000724">
    <property type="entry name" value="Pgk"/>
    <property type="match status" value="1"/>
</dbReference>
<dbReference type="PRINTS" id="PR00477">
    <property type="entry name" value="PHGLYCKINASE"/>
</dbReference>
<dbReference type="SUPFAM" id="SSF53748">
    <property type="entry name" value="Phosphoglycerate kinase"/>
    <property type="match status" value="1"/>
</dbReference>
<dbReference type="PROSITE" id="PS00111">
    <property type="entry name" value="PGLYCERATE_KINASE"/>
    <property type="match status" value="1"/>
</dbReference>
<feature type="chain" id="PRO_0000145874" description="Phosphoglycerate kinase">
    <location>
        <begin position="1"/>
        <end position="416"/>
    </location>
</feature>
<feature type="binding site" evidence="3">
    <location>
        <position position="23"/>
    </location>
    <ligand>
        <name>(2R)-3-phosphoglycerate</name>
        <dbReference type="ChEBI" id="CHEBI:58272"/>
    </ligand>
</feature>
<feature type="binding site" evidence="5">
    <location>
        <position position="24"/>
    </location>
    <ligand>
        <name>(2R)-3-phosphoglycerate</name>
        <dbReference type="ChEBI" id="CHEBI:58272"/>
    </ligand>
</feature>
<feature type="binding site" evidence="3">
    <location>
        <position position="25"/>
    </location>
    <ligand>
        <name>(2R)-3-phosphoglycerate</name>
        <dbReference type="ChEBI" id="CHEBI:58272"/>
    </ligand>
</feature>
<feature type="binding site" evidence="5">
    <location>
        <position position="26"/>
    </location>
    <ligand>
        <name>(2R)-3-phosphoglycerate</name>
        <dbReference type="ChEBI" id="CHEBI:58272"/>
    </ligand>
</feature>
<feature type="binding site" evidence="3">
    <location>
        <position position="38"/>
    </location>
    <ligand>
        <name>(2R)-3-phosphoglycerate</name>
        <dbReference type="ChEBI" id="CHEBI:58272"/>
    </ligand>
</feature>
<feature type="binding site" evidence="5">
    <location>
        <position position="39"/>
    </location>
    <ligand>
        <name>(2R)-3-phosphoglycerate</name>
        <dbReference type="ChEBI" id="CHEBI:58272"/>
    </ligand>
</feature>
<feature type="binding site" evidence="3">
    <location>
        <position position="62"/>
    </location>
    <ligand>
        <name>(2R)-3-phosphoglycerate</name>
        <dbReference type="ChEBI" id="CHEBI:58272"/>
    </ligand>
</feature>
<feature type="binding site" evidence="5">
    <location>
        <position position="63"/>
    </location>
    <ligand>
        <name>(2R)-3-phosphoglycerate</name>
        <dbReference type="ChEBI" id="CHEBI:58272"/>
    </ligand>
</feature>
<feature type="binding site" evidence="3">
    <location>
        <position position="65"/>
    </location>
    <ligand>
        <name>(2R)-3-phosphoglycerate</name>
        <dbReference type="ChEBI" id="CHEBI:58272"/>
    </ligand>
</feature>
<feature type="binding site" evidence="5">
    <location>
        <position position="66"/>
    </location>
    <ligand>
        <name>(2R)-3-phosphoglycerate</name>
        <dbReference type="ChEBI" id="CHEBI:58272"/>
    </ligand>
</feature>
<feature type="binding site" evidence="3">
    <location>
        <position position="121"/>
    </location>
    <ligand>
        <name>(2R)-3-phosphoglycerate</name>
        <dbReference type="ChEBI" id="CHEBI:58272"/>
    </ligand>
</feature>
<feature type="binding site" evidence="5">
    <location>
        <position position="122"/>
    </location>
    <ligand>
        <name>(2R)-3-phosphoglycerate</name>
        <dbReference type="ChEBI" id="CHEBI:58272"/>
    </ligand>
</feature>
<feature type="binding site" evidence="3">
    <location>
        <position position="168"/>
    </location>
    <ligand>
        <name>(2R)-3-phosphoglycerate</name>
        <dbReference type="ChEBI" id="CHEBI:58272"/>
    </ligand>
</feature>
<feature type="binding site" evidence="5">
    <location>
        <position position="169"/>
    </location>
    <ligand>
        <name>(2R)-3-phosphoglycerate</name>
        <dbReference type="ChEBI" id="CHEBI:58272"/>
    </ligand>
</feature>
<feature type="binding site" evidence="3">
    <location>
        <position position="212"/>
    </location>
    <ligand>
        <name>ADP</name>
        <dbReference type="ChEBI" id="CHEBI:456216"/>
    </ligand>
</feature>
<feature type="binding site" evidence="3">
    <location>
        <position position="212"/>
    </location>
    <ligand>
        <name>CDP</name>
        <dbReference type="ChEBI" id="CHEBI:58069"/>
    </ligand>
</feature>
<feature type="binding site" evidence="5">
    <location>
        <position position="213"/>
    </location>
    <ligand>
        <name>AMP</name>
        <dbReference type="ChEBI" id="CHEBI:456215"/>
    </ligand>
</feature>
<feature type="binding site" evidence="5">
    <location>
        <position position="213"/>
    </location>
    <ligand>
        <name>ATP</name>
        <dbReference type="ChEBI" id="CHEBI:30616"/>
    </ligand>
</feature>
<feature type="binding site" evidence="3">
    <location>
        <position position="213"/>
    </location>
    <ligand>
        <name>Mg(2+)</name>
        <dbReference type="ChEBI" id="CHEBI:18420"/>
    </ligand>
</feature>
<feature type="binding site" evidence="5">
    <location>
        <position position="214"/>
    </location>
    <ligand>
        <name>AMP</name>
        <dbReference type="ChEBI" id="CHEBI:456215"/>
    </ligand>
</feature>
<feature type="binding site" evidence="3">
    <location>
        <position position="216"/>
    </location>
    <ligand>
        <name>Mg(2+)</name>
        <dbReference type="ChEBI" id="CHEBI:18420"/>
    </ligand>
</feature>
<feature type="binding site" evidence="3">
    <location>
        <position position="217"/>
    </location>
    <ligand>
        <name>CDP</name>
        <dbReference type="ChEBI" id="CHEBI:58069"/>
    </ligand>
</feature>
<feature type="binding site" evidence="3">
    <location>
        <position position="217"/>
    </location>
    <ligand>
        <name>Mg(2+)</name>
        <dbReference type="ChEBI" id="CHEBI:18420"/>
    </ligand>
</feature>
<feature type="binding site" evidence="5">
    <location>
        <position position="218"/>
    </location>
    <ligand>
        <name>AMP</name>
        <dbReference type="ChEBI" id="CHEBI:456215"/>
    </ligand>
</feature>
<feature type="binding site" evidence="5">
    <location>
        <position position="218"/>
    </location>
    <ligand>
        <name>ATP</name>
        <dbReference type="ChEBI" id="CHEBI:30616"/>
    </ligand>
</feature>
<feature type="binding site" evidence="3">
    <location>
        <position position="236"/>
    </location>
    <ligand>
        <name>ADP</name>
        <dbReference type="ChEBI" id="CHEBI:456216"/>
    </ligand>
</feature>
<feature type="binding site" evidence="3">
    <location>
        <position position="236"/>
    </location>
    <ligand>
        <name>CDP</name>
        <dbReference type="ChEBI" id="CHEBI:58069"/>
    </ligand>
</feature>
<feature type="binding site" evidence="5">
    <location>
        <position position="237"/>
    </location>
    <ligand>
        <name>AMP</name>
        <dbReference type="ChEBI" id="CHEBI:456215"/>
    </ligand>
</feature>
<feature type="binding site" evidence="5">
    <location>
        <position position="237"/>
    </location>
    <ligand>
        <name>ATP</name>
        <dbReference type="ChEBI" id="CHEBI:30616"/>
    </ligand>
</feature>
<feature type="binding site" evidence="5">
    <location>
        <position position="311"/>
    </location>
    <ligand>
        <name>AMP</name>
        <dbReference type="ChEBI" id="CHEBI:456215"/>
    </ligand>
</feature>
<feature type="binding site" evidence="5">
    <location>
        <position position="311"/>
    </location>
    <ligand>
        <name>ATP</name>
        <dbReference type="ChEBI" id="CHEBI:30616"/>
    </ligand>
</feature>
<feature type="binding site" evidence="3">
    <location>
        <position position="336"/>
    </location>
    <ligand>
        <name>CDP</name>
        <dbReference type="ChEBI" id="CHEBI:58069"/>
    </ligand>
</feature>
<feature type="binding site" evidence="3">
    <location>
        <position position="341"/>
    </location>
    <ligand>
        <name>ADP</name>
        <dbReference type="ChEBI" id="CHEBI:456216"/>
    </ligand>
</feature>
<feature type="binding site" evidence="3">
    <location>
        <position position="341"/>
    </location>
    <ligand>
        <name>CDP</name>
        <dbReference type="ChEBI" id="CHEBI:58069"/>
    </ligand>
</feature>
<feature type="binding site" evidence="5">
    <location>
        <position position="342"/>
    </location>
    <ligand>
        <name>AMP</name>
        <dbReference type="ChEBI" id="CHEBI:456215"/>
    </ligand>
</feature>
<feature type="binding site" evidence="5">
    <location>
        <position position="342"/>
    </location>
    <ligand>
        <name>ATP</name>
        <dbReference type="ChEBI" id="CHEBI:30616"/>
    </ligand>
</feature>
<feature type="binding site" evidence="5">
    <location>
        <position position="373"/>
    </location>
    <ligand>
        <name>ATP</name>
        <dbReference type="ChEBI" id="CHEBI:30616"/>
    </ligand>
</feature>
<feature type="binding site" evidence="5">
    <location>
        <position position="373"/>
    </location>
    <ligand>
        <name>Mg(2+)</name>
        <dbReference type="ChEBI" id="CHEBI:18420"/>
    </ligand>
</feature>
<feature type="binding site" evidence="5">
    <location>
        <position position="374"/>
    </location>
    <ligand>
        <name>ATP</name>
        <dbReference type="ChEBI" id="CHEBI:30616"/>
    </ligand>
</feature>
<proteinExistence type="inferred from homology"/>
<keyword id="KW-0067">ATP-binding</keyword>
<keyword id="KW-0963">Cytoplasm</keyword>
<keyword id="KW-0324">Glycolysis</keyword>
<keyword id="KW-0418">Kinase</keyword>
<keyword id="KW-0460">Magnesium</keyword>
<keyword id="KW-0479">Metal-binding</keyword>
<keyword id="KW-0496">Mitochondrion</keyword>
<keyword id="KW-0547">Nucleotide-binding</keyword>
<keyword id="KW-1185">Reference proteome</keyword>
<keyword id="KW-0808">Transferase</keyword>
<sequence>MSLSSKLTVKDLSLAGKRVFIRVDFNVPLDGKTITSNQRIVAALPTIKYVLEQGPKAVVLASHLGRPNGERNEKYSLAPVAAELEKLLGQKVNFLDDCVGEHVTAAVNGAAAGSVFLLENLRFHIEEEGSRKVDGEKVKASAEDVQKFRQGLMSLADVYVNDAFGTAHRAHSSMVGFELPERAGGFLLSRELEYFSKALENPTRPFLAILGGAKVADKIQLIDNLLDKVDSIVIGGGMAFTFKKVLENMEIGNSIYDKAGAEIVPKLAEKAKKNGVKIVLPVDFVIGDDFSQDANTKIVSASEGIPSGWEGLDCGPESRKLFSETIASAKTIVWNGPPGVFEIPKFSEGTQAMLAAAVKASEAGSTVIIGGGDTATVAKKYGVVEKISHVSTGGGASLELLEGKDLPGVTFLSSKQ</sequence>
<evidence type="ECO:0000250" key="1"/>
<evidence type="ECO:0000250" key="2">
    <source>
        <dbReference type="UniProtKB" id="A0A7G5KET3"/>
    </source>
</evidence>
<evidence type="ECO:0000250" key="3">
    <source>
        <dbReference type="UniProtKB" id="P00558"/>
    </source>
</evidence>
<evidence type="ECO:0000250" key="4">
    <source>
        <dbReference type="UniProtKB" id="P00560"/>
    </source>
</evidence>
<evidence type="ECO:0000250" key="5">
    <source>
        <dbReference type="UniProtKB" id="Q7SIB7"/>
    </source>
</evidence>
<evidence type="ECO:0000305" key="6"/>
<protein>
    <recommendedName>
        <fullName>Phosphoglycerate kinase</fullName>
        <ecNumber evidence="4">2.7.2.3</ecNumber>
    </recommendedName>
</protein>
<name>PGK_EREGS</name>
<organism>
    <name type="scientific">Eremothecium gossypii (strain ATCC 10895 / CBS 109.51 / FGSC 9923 / NRRL Y-1056)</name>
    <name type="common">Yeast</name>
    <name type="synonym">Ashbya gossypii</name>
    <dbReference type="NCBI Taxonomy" id="284811"/>
    <lineage>
        <taxon>Eukaryota</taxon>
        <taxon>Fungi</taxon>
        <taxon>Dikarya</taxon>
        <taxon>Ascomycota</taxon>
        <taxon>Saccharomycotina</taxon>
        <taxon>Saccharomycetes</taxon>
        <taxon>Saccharomycetales</taxon>
        <taxon>Saccharomycetaceae</taxon>
        <taxon>Eremothecium</taxon>
    </lineage>
</organism>
<accession>Q757Q0</accession>
<reference key="1">
    <citation type="journal article" date="2004" name="Science">
        <title>The Ashbya gossypii genome as a tool for mapping the ancient Saccharomyces cerevisiae genome.</title>
        <authorList>
            <person name="Dietrich F.S."/>
            <person name="Voegeli S."/>
            <person name="Brachat S."/>
            <person name="Lerch A."/>
            <person name="Gates K."/>
            <person name="Steiner S."/>
            <person name="Mohr C."/>
            <person name="Poehlmann R."/>
            <person name="Luedi P."/>
            <person name="Choi S."/>
            <person name="Wing R.A."/>
            <person name="Flavier A."/>
            <person name="Gaffney T.D."/>
            <person name="Philippsen P."/>
        </authorList>
    </citation>
    <scope>NUCLEOTIDE SEQUENCE [LARGE SCALE GENOMIC DNA]</scope>
    <source>
        <strain>ATCC 10895 / CBS 109.51 / FGSC 9923 / NRRL Y-1056</strain>
    </source>
</reference>
<reference key="2">
    <citation type="journal article" date="2013" name="G3 (Bethesda)">
        <title>Genomes of Ashbya fungi isolated from insects reveal four mating-type loci, numerous translocations, lack of transposons, and distinct gene duplications.</title>
        <authorList>
            <person name="Dietrich F.S."/>
            <person name="Voegeli S."/>
            <person name="Kuo S."/>
            <person name="Philippsen P."/>
        </authorList>
    </citation>
    <scope>GENOME REANNOTATION</scope>
    <scope>SEQUENCE REVISION TO 94-100</scope>
    <source>
        <strain>ATCC 10895 / CBS 109.51 / FGSC 9923 / NRRL Y-1056</strain>
    </source>
</reference>